<proteinExistence type="inferred from homology"/>
<protein>
    <recommendedName>
        <fullName evidence="1">Photosystem I assembly protein Ycf4</fullName>
    </recommendedName>
</protein>
<keyword id="KW-0150">Chloroplast</keyword>
<keyword id="KW-0472">Membrane</keyword>
<keyword id="KW-0602">Photosynthesis</keyword>
<keyword id="KW-0934">Plastid</keyword>
<keyword id="KW-1185">Reference proteome</keyword>
<keyword id="KW-0793">Thylakoid</keyword>
<keyword id="KW-0812">Transmembrane</keyword>
<keyword id="KW-1133">Transmembrane helix</keyword>
<gene>
    <name evidence="1" type="primary">ycf4</name>
</gene>
<name>YCF4_PHATC</name>
<geneLocation type="chloroplast"/>
<reference key="1">
    <citation type="journal article" date="2007" name="Mol. Genet. Genomics">
        <title>Chloroplast genomes of the diatoms Phaeodactylum tricornutum and Thalassiosira pseudonana: comparison with other plastid genomes of the red lineage.</title>
        <authorList>
            <person name="Oudot-Le Secq M.-P."/>
            <person name="Grimwood J."/>
            <person name="Shapiro H."/>
            <person name="Armbrust E.V."/>
            <person name="Bowler C."/>
            <person name="Green B.R."/>
        </authorList>
    </citation>
    <scope>NUCLEOTIDE SEQUENCE [LARGE SCALE GENOMIC DNA]</scope>
    <source>
        <strain>CCAP 1055/1</strain>
    </source>
</reference>
<feature type="chain" id="PRO_0000275680" description="Photosystem I assembly protein Ycf4">
    <location>
        <begin position="1"/>
        <end position="181"/>
    </location>
</feature>
<feature type="transmembrane region" description="Helical" evidence="1">
    <location>
        <begin position="19"/>
        <end position="39"/>
    </location>
</feature>
<feature type="transmembrane region" description="Helical" evidence="1">
    <location>
        <begin position="62"/>
        <end position="82"/>
    </location>
</feature>
<dbReference type="EMBL" id="EF067920">
    <property type="protein sequence ID" value="ABK20591.1"/>
    <property type="molecule type" value="Genomic_DNA"/>
</dbReference>
<dbReference type="RefSeq" id="YP_874368.1">
    <property type="nucleotide sequence ID" value="NC_008588.1"/>
</dbReference>
<dbReference type="STRING" id="556484.A0T0A2"/>
<dbReference type="GeneID" id="4524570"/>
<dbReference type="InParanoid" id="A0T0A2"/>
<dbReference type="Proteomes" id="UP000000759">
    <property type="component" value="Chloroplast"/>
</dbReference>
<dbReference type="GO" id="GO:0009535">
    <property type="term" value="C:chloroplast thylakoid membrane"/>
    <property type="evidence" value="ECO:0007669"/>
    <property type="project" value="UniProtKB-SubCell"/>
</dbReference>
<dbReference type="GO" id="GO:0009522">
    <property type="term" value="C:photosystem I"/>
    <property type="evidence" value="ECO:0007669"/>
    <property type="project" value="InterPro"/>
</dbReference>
<dbReference type="GO" id="GO:0015979">
    <property type="term" value="P:photosynthesis"/>
    <property type="evidence" value="ECO:0007669"/>
    <property type="project" value="UniProtKB-UniRule"/>
</dbReference>
<dbReference type="HAMAP" id="MF_00437">
    <property type="entry name" value="Ycf4"/>
    <property type="match status" value="1"/>
</dbReference>
<dbReference type="InterPro" id="IPR003359">
    <property type="entry name" value="PSI_Ycf4_assembly"/>
</dbReference>
<dbReference type="NCBIfam" id="NF002712">
    <property type="entry name" value="PRK02542.1"/>
    <property type="match status" value="1"/>
</dbReference>
<dbReference type="Pfam" id="PF02392">
    <property type="entry name" value="Ycf4"/>
    <property type="match status" value="1"/>
</dbReference>
<organism>
    <name type="scientific">Phaeodactylum tricornutum (strain CCAP 1055/1)</name>
    <dbReference type="NCBI Taxonomy" id="556484"/>
    <lineage>
        <taxon>Eukaryota</taxon>
        <taxon>Sar</taxon>
        <taxon>Stramenopiles</taxon>
        <taxon>Ochrophyta</taxon>
        <taxon>Bacillariophyta</taxon>
        <taxon>Bacillariophyceae</taxon>
        <taxon>Bacillariophycidae</taxon>
        <taxon>Naviculales</taxon>
        <taxon>Phaeodactylaceae</taxon>
        <taxon>Phaeodactylum</taxon>
    </lineage>
</organism>
<evidence type="ECO:0000255" key="1">
    <source>
        <dbReference type="HAMAP-Rule" id="MF_00437"/>
    </source>
</evidence>
<sequence length="181" mass="20477">MQNEIRQDKIIGSRRFSNYFWAFFLLVGGLGFLLAGISSYFKVNLLPFTNTTELVFIPQGLVMMFYGALSLGISIYTLLTIILDIGSGYNEYNRIENLVKVVRKGFPGKNREILLTYSLSNVRAIGIKITEGLNPTRSIYLCLKDERNIPLTPVQEPTAISNLEEEATDLAKFLDLRLENL</sequence>
<accession>A0T0A2</accession>
<comment type="function">
    <text evidence="1">Seems to be required for the assembly of the photosystem I complex.</text>
</comment>
<comment type="subcellular location">
    <subcellularLocation>
        <location evidence="1">Plastid</location>
        <location evidence="1">Chloroplast thylakoid membrane</location>
        <topology evidence="1">Multi-pass membrane protein</topology>
    </subcellularLocation>
</comment>
<comment type="similarity">
    <text evidence="1">Belongs to the Ycf4 family.</text>
</comment>